<proteinExistence type="inferred from homology"/>
<dbReference type="EC" id="2.7.7.59" evidence="1"/>
<dbReference type="EC" id="3.1.4.-" evidence="1"/>
<dbReference type="EMBL" id="CP001050">
    <property type="protein sequence ID" value="ACF29690.1"/>
    <property type="molecule type" value="Genomic_DNA"/>
</dbReference>
<dbReference type="RefSeq" id="WP_003691177.1">
    <property type="nucleotide sequence ID" value="NC_011035.1"/>
</dbReference>
<dbReference type="SMR" id="B4RLK3"/>
<dbReference type="GeneID" id="66753135"/>
<dbReference type="KEGG" id="ngk:NGK_1013"/>
<dbReference type="HOGENOM" id="CLU_012833_0_0_4"/>
<dbReference type="Proteomes" id="UP000002564">
    <property type="component" value="Chromosome"/>
</dbReference>
<dbReference type="GO" id="GO:0008773">
    <property type="term" value="F:[protein-PII] uridylyltransferase activity"/>
    <property type="evidence" value="ECO:0007669"/>
    <property type="project" value="UniProtKB-UniRule"/>
</dbReference>
<dbReference type="GO" id="GO:0008081">
    <property type="term" value="F:phosphoric diester hydrolase activity"/>
    <property type="evidence" value="ECO:0007669"/>
    <property type="project" value="UniProtKB-UniRule"/>
</dbReference>
<dbReference type="GO" id="GO:0006808">
    <property type="term" value="P:regulation of nitrogen utilization"/>
    <property type="evidence" value="ECO:0007669"/>
    <property type="project" value="UniProtKB-UniRule"/>
</dbReference>
<dbReference type="CDD" id="cd04899">
    <property type="entry name" value="ACT_ACR-UUR-like_2"/>
    <property type="match status" value="1"/>
</dbReference>
<dbReference type="CDD" id="cd04900">
    <property type="entry name" value="ACT_UUR-like_1"/>
    <property type="match status" value="1"/>
</dbReference>
<dbReference type="CDD" id="cd00077">
    <property type="entry name" value="HDc"/>
    <property type="match status" value="1"/>
</dbReference>
<dbReference type="CDD" id="cd05401">
    <property type="entry name" value="NT_GlnE_GlnD_like"/>
    <property type="match status" value="1"/>
</dbReference>
<dbReference type="Gene3D" id="1.10.3210.10">
    <property type="entry name" value="Hypothetical protein af1432"/>
    <property type="match status" value="1"/>
</dbReference>
<dbReference type="Gene3D" id="1.20.120.330">
    <property type="entry name" value="Nucleotidyltransferases domain 2"/>
    <property type="match status" value="1"/>
</dbReference>
<dbReference type="HAMAP" id="MF_00277">
    <property type="entry name" value="PII_uridylyl_transf"/>
    <property type="match status" value="1"/>
</dbReference>
<dbReference type="InterPro" id="IPR045865">
    <property type="entry name" value="ACT-like_dom_sf"/>
</dbReference>
<dbReference type="InterPro" id="IPR002912">
    <property type="entry name" value="ACT_dom"/>
</dbReference>
<dbReference type="InterPro" id="IPR003607">
    <property type="entry name" value="HD/PDEase_dom"/>
</dbReference>
<dbReference type="InterPro" id="IPR006674">
    <property type="entry name" value="HD_domain"/>
</dbReference>
<dbReference type="InterPro" id="IPR043519">
    <property type="entry name" value="NT_sf"/>
</dbReference>
<dbReference type="InterPro" id="IPR013546">
    <property type="entry name" value="PII_UdlTrfase/GS_AdlTrfase"/>
</dbReference>
<dbReference type="InterPro" id="IPR010043">
    <property type="entry name" value="UTase/UR"/>
</dbReference>
<dbReference type="NCBIfam" id="TIGR01693">
    <property type="entry name" value="UTase_glnD"/>
    <property type="match status" value="1"/>
</dbReference>
<dbReference type="PANTHER" id="PTHR47320">
    <property type="entry name" value="BIFUNCTIONAL URIDYLYLTRANSFERASE/URIDYLYL-REMOVING ENZYME"/>
    <property type="match status" value="1"/>
</dbReference>
<dbReference type="PANTHER" id="PTHR47320:SF1">
    <property type="entry name" value="BIFUNCTIONAL URIDYLYLTRANSFERASE_URIDYLYL-REMOVING ENZYME"/>
    <property type="match status" value="1"/>
</dbReference>
<dbReference type="Pfam" id="PF08335">
    <property type="entry name" value="GlnD_UR_UTase"/>
    <property type="match status" value="1"/>
</dbReference>
<dbReference type="Pfam" id="PF01966">
    <property type="entry name" value="HD"/>
    <property type="match status" value="1"/>
</dbReference>
<dbReference type="PIRSF" id="PIRSF006288">
    <property type="entry name" value="PII_uridyltransf"/>
    <property type="match status" value="1"/>
</dbReference>
<dbReference type="SMART" id="SM00471">
    <property type="entry name" value="HDc"/>
    <property type="match status" value="1"/>
</dbReference>
<dbReference type="SUPFAM" id="SSF55021">
    <property type="entry name" value="ACT-like"/>
    <property type="match status" value="2"/>
</dbReference>
<dbReference type="SUPFAM" id="SSF109604">
    <property type="entry name" value="HD-domain/PDEase-like"/>
    <property type="match status" value="1"/>
</dbReference>
<dbReference type="SUPFAM" id="SSF81301">
    <property type="entry name" value="Nucleotidyltransferase"/>
    <property type="match status" value="1"/>
</dbReference>
<dbReference type="SUPFAM" id="SSF81593">
    <property type="entry name" value="Nucleotidyltransferase substrate binding subunit/domain"/>
    <property type="match status" value="1"/>
</dbReference>
<dbReference type="PROSITE" id="PS51671">
    <property type="entry name" value="ACT"/>
    <property type="match status" value="2"/>
</dbReference>
<dbReference type="PROSITE" id="PS51831">
    <property type="entry name" value="HD"/>
    <property type="match status" value="1"/>
</dbReference>
<gene>
    <name evidence="1" type="primary">glnD</name>
    <name type="ordered locus">NGK_1013</name>
</gene>
<feature type="chain" id="PRO_1000114756" description="Bifunctional uridylyltransferase/uridylyl-removing enzyme">
    <location>
        <begin position="1"/>
        <end position="852"/>
    </location>
</feature>
<feature type="domain" description="HD" evidence="2">
    <location>
        <begin position="436"/>
        <end position="558"/>
    </location>
</feature>
<feature type="domain" description="ACT 1" evidence="1">
    <location>
        <begin position="673"/>
        <end position="757"/>
    </location>
</feature>
<feature type="domain" description="ACT 2" evidence="1">
    <location>
        <begin position="785"/>
        <end position="852"/>
    </location>
</feature>
<feature type="region of interest" description="Uridylyltransferase">
    <location>
        <begin position="1"/>
        <end position="318"/>
    </location>
</feature>
<feature type="region of interest" description="Uridylyl-removing">
    <location>
        <begin position="319"/>
        <end position="672"/>
    </location>
</feature>
<keyword id="KW-0378">Hydrolase</keyword>
<keyword id="KW-0460">Magnesium</keyword>
<keyword id="KW-0511">Multifunctional enzyme</keyword>
<keyword id="KW-0548">Nucleotidyltransferase</keyword>
<keyword id="KW-0677">Repeat</keyword>
<keyword id="KW-0808">Transferase</keyword>
<protein>
    <recommendedName>
        <fullName evidence="1">Bifunctional uridylyltransferase/uridylyl-removing enzyme</fullName>
        <shortName evidence="1">UTase/UR</shortName>
    </recommendedName>
    <alternativeName>
        <fullName evidence="1">Bifunctional [protein-PII] modification enzyme</fullName>
    </alternativeName>
    <alternativeName>
        <fullName evidence="1">Bifunctional nitrogen sensor protein</fullName>
    </alternativeName>
    <domain>
        <recommendedName>
            <fullName evidence="1">[Protein-PII] uridylyltransferase</fullName>
            <shortName evidence="1">PII uridylyltransferase</shortName>
            <shortName evidence="1">UTase</shortName>
            <ecNumber evidence="1">2.7.7.59</ecNumber>
        </recommendedName>
    </domain>
    <domain>
        <recommendedName>
            <fullName evidence="1">[Protein-PII]-UMP uridylyl-removing enzyme</fullName>
            <shortName evidence="1">UR</shortName>
            <ecNumber evidence="1">3.1.4.-</ecNumber>
        </recommendedName>
    </domain>
</protein>
<accession>B4RLK3</accession>
<name>GLND_NEIG2</name>
<reference key="1">
    <citation type="journal article" date="2008" name="J. Bacteriol.">
        <title>Complete genome sequence of Neisseria gonorrhoeae NCCP11945.</title>
        <authorList>
            <person name="Chung G.T."/>
            <person name="Yoo J.S."/>
            <person name="Oh H.B."/>
            <person name="Lee Y.S."/>
            <person name="Cha S.H."/>
            <person name="Kim S.J."/>
            <person name="Yoo C.K."/>
        </authorList>
    </citation>
    <scope>NUCLEOTIDE SEQUENCE [LARGE SCALE GENOMIC DNA]</scope>
    <source>
        <strain>NCCP11945</strain>
    </source>
</reference>
<organism>
    <name type="scientific">Neisseria gonorrhoeae (strain NCCP11945)</name>
    <dbReference type="NCBI Taxonomy" id="521006"/>
    <lineage>
        <taxon>Bacteria</taxon>
        <taxon>Pseudomonadati</taxon>
        <taxon>Pseudomonadota</taxon>
        <taxon>Betaproteobacteria</taxon>
        <taxon>Neisseriales</taxon>
        <taxon>Neisseriaceae</taxon>
        <taxon>Neisseria</taxon>
    </lineage>
</organism>
<comment type="function">
    <text evidence="1">Modifies, by uridylylation and deuridylylation, the PII regulatory proteins (GlnB and homologs), in response to the nitrogen status of the cell that GlnD senses through the glutamine level. Under low glutamine levels, catalyzes the conversion of the PII proteins and UTP to PII-UMP and PPi, while under higher glutamine levels, GlnD hydrolyzes PII-UMP to PII and UMP (deuridylylation). Thus, controls uridylylation state and activity of the PII proteins, and plays an important role in the regulation of nitrogen assimilation and metabolism.</text>
</comment>
<comment type="catalytic activity">
    <reaction evidence="1">
        <text>[protein-PII]-L-tyrosine + UTP = [protein-PII]-uridylyl-L-tyrosine + diphosphate</text>
        <dbReference type="Rhea" id="RHEA:13673"/>
        <dbReference type="Rhea" id="RHEA-COMP:12147"/>
        <dbReference type="Rhea" id="RHEA-COMP:12148"/>
        <dbReference type="ChEBI" id="CHEBI:33019"/>
        <dbReference type="ChEBI" id="CHEBI:46398"/>
        <dbReference type="ChEBI" id="CHEBI:46858"/>
        <dbReference type="ChEBI" id="CHEBI:90602"/>
        <dbReference type="EC" id="2.7.7.59"/>
    </reaction>
</comment>
<comment type="catalytic activity">
    <reaction evidence="1">
        <text>[protein-PII]-uridylyl-L-tyrosine + H2O = [protein-PII]-L-tyrosine + UMP + H(+)</text>
        <dbReference type="Rhea" id="RHEA:48600"/>
        <dbReference type="Rhea" id="RHEA-COMP:12147"/>
        <dbReference type="Rhea" id="RHEA-COMP:12148"/>
        <dbReference type="ChEBI" id="CHEBI:15377"/>
        <dbReference type="ChEBI" id="CHEBI:15378"/>
        <dbReference type="ChEBI" id="CHEBI:46858"/>
        <dbReference type="ChEBI" id="CHEBI:57865"/>
        <dbReference type="ChEBI" id="CHEBI:90602"/>
    </reaction>
</comment>
<comment type="cofactor">
    <cofactor evidence="1">
        <name>Mg(2+)</name>
        <dbReference type="ChEBI" id="CHEBI:18420"/>
    </cofactor>
</comment>
<comment type="activity regulation">
    <text evidence="1">Uridylyltransferase (UTase) activity is inhibited by glutamine, while glutamine activates uridylyl-removing (UR) activity.</text>
</comment>
<comment type="domain">
    <text evidence="1">Has four distinct domains: an N-terminal nucleotidyltransferase (NT) domain responsible for UTase activity, a central HD domain that encodes UR activity, and two C-terminal ACT domains that seem to have a role in glutamine sensing.</text>
</comment>
<comment type="similarity">
    <text evidence="1">Belongs to the GlnD family.</text>
</comment>
<evidence type="ECO:0000255" key="1">
    <source>
        <dbReference type="HAMAP-Rule" id="MF_00277"/>
    </source>
</evidence>
<evidence type="ECO:0000255" key="2">
    <source>
        <dbReference type="PROSITE-ProRule" id="PRU01175"/>
    </source>
</evidence>
<sequence>MPENLSSALETFKQQRNAAEAHYLKANRVSVFFREYTAAVETLLAALWAEHFQNSALCLMAVGGFGRGEPYPCSDVDLAVVSPAPLSDGIQEQIARFIQTLWDCKLMPSVKSGSVDELCESVRDDITGDTAFLEARFLFGNRQTADELAEKMNVQRNVAAFIEAKLVEMEHRHAKSQGSGAVLEPNIKSCPGGLRDIHTLLWIAKAQGLAANLPDLLKQRILTRAEAGMLSHGYRRLAHIRIRLHLNAKRAEDRLLFDLQPQVAESMGYQDENRRRQSEELMRVFYRAVKTVKQLGGILTPMLRSRVSSTPMRVTLRIDDDYIQVNNQIAARHTDIFFRRPEHIFKIVEIMQQRNDITALEPQTLRAWWGATRKINRSFYQNSENRRRFAGFFRSGNGLTQTLRFLNLYGVLGRYLPAWEKIVGLLQHDLFHIYPVDDHILAVVRNVRRLALDMHSHELPYASALMQSFEKQDILYLAAFFHDIAKGRGGDHAVQGIADARQFAADHFLTEEESDLLAWLVENHLLMSAVAQKEDIQDPGVLDAFCKRVQTHERLSALYLLTISDIRGTNPKLWNAWRASLLESLFHAAGRCLAGNDGNPHALFGRRRQEAADLLTRAAVPEKQQKKLWNALGSAYFARHQSREILWHAANLVHDFEPPIVRSRILPQSDSFQVMVFMPNGPRLFARLCRIFSRHGFDILAARAFITEHDYILDTFIVQIPSQHAPEDYPDIQSALEAELNSFIHGHTVAETQSCNRRISRRSRYMPIAPSITITPEEDYPDRYSVEITAVNRPFLLADMAEVFFAHNVSLRYAKISTLDERVEDSFTVFSPDLKNPKIQSSLKQALLEQLA</sequence>